<proteinExistence type="inferred from homology"/>
<name>RS18_ACIB3</name>
<sequence>MARFYRRRKFCRFTAENVAYIDYKDIDTLKQYITENGKIVPSRITGTKARYQRQLALAIKQARYLSLIPYTDNHK</sequence>
<feature type="chain" id="PRO_1000196509" description="Small ribosomal subunit protein bS18">
    <location>
        <begin position="1"/>
        <end position="75"/>
    </location>
</feature>
<evidence type="ECO:0000255" key="1">
    <source>
        <dbReference type="HAMAP-Rule" id="MF_00270"/>
    </source>
</evidence>
<evidence type="ECO:0000305" key="2"/>
<organism>
    <name type="scientific">Acinetobacter baumannii (strain AB307-0294)</name>
    <dbReference type="NCBI Taxonomy" id="557600"/>
    <lineage>
        <taxon>Bacteria</taxon>
        <taxon>Pseudomonadati</taxon>
        <taxon>Pseudomonadota</taxon>
        <taxon>Gammaproteobacteria</taxon>
        <taxon>Moraxellales</taxon>
        <taxon>Moraxellaceae</taxon>
        <taxon>Acinetobacter</taxon>
        <taxon>Acinetobacter calcoaceticus/baumannii complex</taxon>
    </lineage>
</organism>
<dbReference type="EMBL" id="CP001172">
    <property type="protein sequence ID" value="ACJ59428.1"/>
    <property type="molecule type" value="Genomic_DNA"/>
</dbReference>
<dbReference type="RefSeq" id="WP_000090661.1">
    <property type="nucleotide sequence ID" value="NZ_CP001172.1"/>
</dbReference>
<dbReference type="SMR" id="B7H0J9"/>
<dbReference type="GeneID" id="92894414"/>
<dbReference type="HOGENOM" id="CLU_148710_2_3_6"/>
<dbReference type="Proteomes" id="UP000006924">
    <property type="component" value="Chromosome"/>
</dbReference>
<dbReference type="GO" id="GO:0022627">
    <property type="term" value="C:cytosolic small ribosomal subunit"/>
    <property type="evidence" value="ECO:0007669"/>
    <property type="project" value="TreeGrafter"/>
</dbReference>
<dbReference type="GO" id="GO:0070181">
    <property type="term" value="F:small ribosomal subunit rRNA binding"/>
    <property type="evidence" value="ECO:0007669"/>
    <property type="project" value="TreeGrafter"/>
</dbReference>
<dbReference type="GO" id="GO:0003735">
    <property type="term" value="F:structural constituent of ribosome"/>
    <property type="evidence" value="ECO:0007669"/>
    <property type="project" value="InterPro"/>
</dbReference>
<dbReference type="GO" id="GO:0006412">
    <property type="term" value="P:translation"/>
    <property type="evidence" value="ECO:0007669"/>
    <property type="project" value="UniProtKB-UniRule"/>
</dbReference>
<dbReference type="FunFam" id="4.10.640.10:FF:000001">
    <property type="entry name" value="30S ribosomal protein S18"/>
    <property type="match status" value="1"/>
</dbReference>
<dbReference type="Gene3D" id="4.10.640.10">
    <property type="entry name" value="Ribosomal protein S18"/>
    <property type="match status" value="1"/>
</dbReference>
<dbReference type="HAMAP" id="MF_00270">
    <property type="entry name" value="Ribosomal_bS18"/>
    <property type="match status" value="1"/>
</dbReference>
<dbReference type="InterPro" id="IPR001648">
    <property type="entry name" value="Ribosomal_bS18"/>
</dbReference>
<dbReference type="InterPro" id="IPR018275">
    <property type="entry name" value="Ribosomal_bS18_CS"/>
</dbReference>
<dbReference type="InterPro" id="IPR036870">
    <property type="entry name" value="Ribosomal_bS18_sf"/>
</dbReference>
<dbReference type="NCBIfam" id="TIGR00165">
    <property type="entry name" value="S18"/>
    <property type="match status" value="1"/>
</dbReference>
<dbReference type="PANTHER" id="PTHR13479">
    <property type="entry name" value="30S RIBOSOMAL PROTEIN S18"/>
    <property type="match status" value="1"/>
</dbReference>
<dbReference type="PANTHER" id="PTHR13479:SF40">
    <property type="entry name" value="SMALL RIBOSOMAL SUBUNIT PROTEIN BS18M"/>
    <property type="match status" value="1"/>
</dbReference>
<dbReference type="Pfam" id="PF01084">
    <property type="entry name" value="Ribosomal_S18"/>
    <property type="match status" value="1"/>
</dbReference>
<dbReference type="PRINTS" id="PR00974">
    <property type="entry name" value="RIBOSOMALS18"/>
</dbReference>
<dbReference type="SUPFAM" id="SSF46911">
    <property type="entry name" value="Ribosomal protein S18"/>
    <property type="match status" value="1"/>
</dbReference>
<dbReference type="PROSITE" id="PS00057">
    <property type="entry name" value="RIBOSOMAL_S18"/>
    <property type="match status" value="1"/>
</dbReference>
<comment type="function">
    <text evidence="1">Binds as a heterodimer with protein bS6 to the central domain of the 16S rRNA, where it helps stabilize the platform of the 30S subunit.</text>
</comment>
<comment type="subunit">
    <text evidence="1">Part of the 30S ribosomal subunit. Forms a tight heterodimer with protein bS6.</text>
</comment>
<comment type="similarity">
    <text evidence="1">Belongs to the bacterial ribosomal protein bS18 family.</text>
</comment>
<keyword id="KW-0687">Ribonucleoprotein</keyword>
<keyword id="KW-0689">Ribosomal protein</keyword>
<keyword id="KW-0694">RNA-binding</keyword>
<keyword id="KW-0699">rRNA-binding</keyword>
<protein>
    <recommendedName>
        <fullName evidence="1">Small ribosomal subunit protein bS18</fullName>
    </recommendedName>
    <alternativeName>
        <fullName evidence="2">30S ribosomal protein S18</fullName>
    </alternativeName>
</protein>
<accession>B7H0J9</accession>
<reference key="1">
    <citation type="journal article" date="2008" name="J. Bacteriol.">
        <title>Comparative genome sequence analysis of multidrug-resistant Acinetobacter baumannii.</title>
        <authorList>
            <person name="Adams M.D."/>
            <person name="Goglin K."/>
            <person name="Molyneaux N."/>
            <person name="Hujer K.M."/>
            <person name="Lavender H."/>
            <person name="Jamison J.J."/>
            <person name="MacDonald I.J."/>
            <person name="Martin K.M."/>
            <person name="Russo T."/>
            <person name="Campagnari A.A."/>
            <person name="Hujer A.M."/>
            <person name="Bonomo R.A."/>
            <person name="Gill S.R."/>
        </authorList>
    </citation>
    <scope>NUCLEOTIDE SEQUENCE [LARGE SCALE GENOMIC DNA]</scope>
    <source>
        <strain>AB307-0294</strain>
    </source>
</reference>
<gene>
    <name evidence="1" type="primary">rpsR</name>
    <name type="ordered locus">ABBFA_001292</name>
</gene>